<reference key="1">
    <citation type="journal article" date="2009" name="Proc. Natl. Acad. Sci. U.S.A.">
        <title>Biogeography of the Sulfolobus islandicus pan-genome.</title>
        <authorList>
            <person name="Reno M.L."/>
            <person name="Held N.L."/>
            <person name="Fields C.J."/>
            <person name="Burke P.V."/>
            <person name="Whitaker R.J."/>
        </authorList>
    </citation>
    <scope>NUCLEOTIDE SEQUENCE [LARGE SCALE GENOMIC DNA]</scope>
    <source>
        <strain>M.16.4 / Kamchatka #3</strain>
    </source>
</reference>
<gene>
    <name evidence="1" type="primary">creN7</name>
    <name type="ordered locus">M164_1232</name>
</gene>
<organism>
    <name type="scientific">Saccharolobus islandicus (strain M.16.4 / Kamchatka #3)</name>
    <name type="common">Sulfolobus islandicus</name>
    <dbReference type="NCBI Taxonomy" id="426118"/>
    <lineage>
        <taxon>Archaea</taxon>
        <taxon>Thermoproteota</taxon>
        <taxon>Thermoprotei</taxon>
        <taxon>Sulfolobales</taxon>
        <taxon>Sulfolobaceae</taxon>
        <taxon>Saccharolobus</taxon>
    </lineage>
</organism>
<accession>C4KGX2</accession>
<name>CREN7_SACI6</name>
<evidence type="ECO:0000255" key="1">
    <source>
        <dbReference type="HAMAP-Rule" id="MF_01387"/>
    </source>
</evidence>
<keyword id="KW-0158">Chromosome</keyword>
<keyword id="KW-0963">Cytoplasm</keyword>
<keyword id="KW-0238">DNA-binding</keyword>
<keyword id="KW-0488">Methylation</keyword>
<comment type="function">
    <text evidence="1">A chromatin protein, binds double-stranded DNA without sequence specificity. Constrains negative DNA supercoils.</text>
</comment>
<comment type="subunit">
    <text evidence="1">Monomer.</text>
</comment>
<comment type="subcellular location">
    <subcellularLocation>
        <location evidence="1">Chromosome</location>
    </subcellularLocation>
    <subcellularLocation>
        <location evidence="1">Cytoplasm</location>
    </subcellularLocation>
</comment>
<comment type="PTM">
    <text evidence="1">Methylated at multiple sites, to varying extents.</text>
</comment>
<comment type="similarity">
    <text evidence="1">Belongs to the Cren7 family.</text>
</comment>
<proteinExistence type="inferred from homology"/>
<sequence>MSSGKKAVKVKTPAGKEAELVPEKVWALAPKGRKGVKIGLFKDPETGKYFRHKLPDDYPI</sequence>
<protein>
    <recommendedName>
        <fullName evidence="1">Chromatin protein Cren7</fullName>
    </recommendedName>
</protein>
<dbReference type="EMBL" id="CP001402">
    <property type="protein sequence ID" value="ACR41836.1"/>
    <property type="molecule type" value="Genomic_DNA"/>
</dbReference>
<dbReference type="RefSeq" id="WP_012711256.1">
    <property type="nucleotide sequence ID" value="NC_012726.1"/>
</dbReference>
<dbReference type="SMR" id="C4KGX2"/>
<dbReference type="GeneID" id="84061563"/>
<dbReference type="KEGG" id="sid:M164_1232"/>
<dbReference type="HOGENOM" id="CLU_2911298_0_0_2"/>
<dbReference type="Proteomes" id="UP000001479">
    <property type="component" value="Chromosome"/>
</dbReference>
<dbReference type="GO" id="GO:0005694">
    <property type="term" value="C:chromosome"/>
    <property type="evidence" value="ECO:0007669"/>
    <property type="project" value="UniProtKB-SubCell"/>
</dbReference>
<dbReference type="GO" id="GO:0005737">
    <property type="term" value="C:cytoplasm"/>
    <property type="evidence" value="ECO:0007669"/>
    <property type="project" value="UniProtKB-SubCell"/>
</dbReference>
<dbReference type="GO" id="GO:0003690">
    <property type="term" value="F:double-stranded DNA binding"/>
    <property type="evidence" value="ECO:0007669"/>
    <property type="project" value="UniProtKB-UniRule"/>
</dbReference>
<dbReference type="Gene3D" id="2.30.30.610">
    <property type="entry name" value="Chromatin protein Cren7"/>
    <property type="match status" value="1"/>
</dbReference>
<dbReference type="HAMAP" id="MF_01387">
    <property type="entry name" value="Chromatin_Cren7"/>
    <property type="match status" value="1"/>
</dbReference>
<dbReference type="InterPro" id="IPR038647">
    <property type="entry name" value="Cren7_sf"/>
</dbReference>
<dbReference type="InterPro" id="IPR020906">
    <property type="entry name" value="dsDNA-bd_Cren7"/>
</dbReference>
<dbReference type="Pfam" id="PF11520">
    <property type="entry name" value="Cren7"/>
    <property type="match status" value="1"/>
</dbReference>
<feature type="chain" id="PRO_1000215131" description="Chromatin protein Cren7">
    <location>
        <begin position="1"/>
        <end position="60"/>
    </location>
</feature>